<dbReference type="EC" id="3.5.1.135" evidence="2"/>
<dbReference type="EMBL" id="CP000946">
    <property type="protein sequence ID" value="ACA76481.1"/>
    <property type="molecule type" value="Genomic_DNA"/>
</dbReference>
<dbReference type="RefSeq" id="WP_001182957.1">
    <property type="nucleotide sequence ID" value="NZ_MTFT01000004.1"/>
</dbReference>
<dbReference type="BMRB" id="B1ITA2"/>
<dbReference type="SMR" id="B1ITA2"/>
<dbReference type="GeneID" id="75173001"/>
<dbReference type="KEGG" id="ecl:EcolC_0809"/>
<dbReference type="HOGENOM" id="CLU_152586_0_0_6"/>
<dbReference type="GO" id="GO:0005829">
    <property type="term" value="C:cytosol"/>
    <property type="evidence" value="ECO:0007669"/>
    <property type="project" value="TreeGrafter"/>
</dbReference>
<dbReference type="GO" id="GO:0016813">
    <property type="term" value="F:hydrolase activity, acting on carbon-nitrogen (but not peptide) bonds, in linear amidines"/>
    <property type="evidence" value="ECO:0007669"/>
    <property type="project" value="UniProtKB-UniRule"/>
</dbReference>
<dbReference type="GO" id="GO:0106251">
    <property type="term" value="F:N4-acetylcytidine amidohydrolase activity"/>
    <property type="evidence" value="ECO:0007669"/>
    <property type="project" value="RHEA"/>
</dbReference>
<dbReference type="CDD" id="cd06552">
    <property type="entry name" value="ASCH_yqfb_like"/>
    <property type="match status" value="1"/>
</dbReference>
<dbReference type="FunFam" id="2.30.130.30:FF:000001">
    <property type="entry name" value="UPF0267 protein YqfB"/>
    <property type="match status" value="1"/>
</dbReference>
<dbReference type="Gene3D" id="2.30.130.30">
    <property type="entry name" value="Hypothetical protein"/>
    <property type="match status" value="1"/>
</dbReference>
<dbReference type="HAMAP" id="MF_00684">
    <property type="entry name" value="ac4C_amidohydr"/>
    <property type="match status" value="1"/>
</dbReference>
<dbReference type="InterPro" id="IPR008314">
    <property type="entry name" value="AC4CH"/>
</dbReference>
<dbReference type="InterPro" id="IPR007374">
    <property type="entry name" value="ASCH_domain"/>
</dbReference>
<dbReference type="InterPro" id="IPR015947">
    <property type="entry name" value="PUA-like_sf"/>
</dbReference>
<dbReference type="NCBIfam" id="NF003443">
    <property type="entry name" value="PRK04980.1"/>
    <property type="match status" value="1"/>
</dbReference>
<dbReference type="PANTHER" id="PTHR38088">
    <property type="entry name" value="UCP029143 FAMILY PROTEIN"/>
    <property type="match status" value="1"/>
</dbReference>
<dbReference type="PANTHER" id="PTHR38088:SF2">
    <property type="entry name" value="UCP029143 FAMILY PROTEIN"/>
    <property type="match status" value="1"/>
</dbReference>
<dbReference type="Pfam" id="PF04266">
    <property type="entry name" value="ASCH"/>
    <property type="match status" value="1"/>
</dbReference>
<dbReference type="PIRSF" id="PIRSF029143">
    <property type="entry name" value="UCP029143"/>
    <property type="match status" value="1"/>
</dbReference>
<dbReference type="SMART" id="SM01022">
    <property type="entry name" value="ASCH"/>
    <property type="match status" value="1"/>
</dbReference>
<dbReference type="SUPFAM" id="SSF88697">
    <property type="entry name" value="PUA domain-like"/>
    <property type="match status" value="1"/>
</dbReference>
<proteinExistence type="inferred from homology"/>
<sequence>MQPNDITFFQRFQDDILAGRKTITIRDESESHFKTGDVLRVGRFEDDGYFCTIEVTATSTVTLDTLTEKHAEQENMTLTELKKVIADIYPGQTQFYVIEFKCL</sequence>
<reference key="1">
    <citation type="submission" date="2008-02" db="EMBL/GenBank/DDBJ databases">
        <title>Complete sequence of Escherichia coli C str. ATCC 8739.</title>
        <authorList>
            <person name="Copeland A."/>
            <person name="Lucas S."/>
            <person name="Lapidus A."/>
            <person name="Glavina del Rio T."/>
            <person name="Dalin E."/>
            <person name="Tice H."/>
            <person name="Bruce D."/>
            <person name="Goodwin L."/>
            <person name="Pitluck S."/>
            <person name="Kiss H."/>
            <person name="Brettin T."/>
            <person name="Detter J.C."/>
            <person name="Han C."/>
            <person name="Kuske C.R."/>
            <person name="Schmutz J."/>
            <person name="Larimer F."/>
            <person name="Land M."/>
            <person name="Hauser L."/>
            <person name="Kyrpides N."/>
            <person name="Mikhailova N."/>
            <person name="Ingram L."/>
            <person name="Richardson P."/>
        </authorList>
    </citation>
    <scope>NUCLEOTIDE SEQUENCE [LARGE SCALE GENOMIC DNA]</scope>
    <source>
        <strain>ATCC 8739 / DSM 1576 / NBRC 3972 / NCIMB 8545 / WDCM 00012 / Crooks</strain>
    </source>
</reference>
<name>AC4CH_ECOLC</name>
<comment type="function">
    <text evidence="2">Catalyzes the hydrolysis of N(4)-acetylcytidine (ac4C).</text>
</comment>
<comment type="catalytic activity">
    <reaction evidence="2">
        <text>N(4)-acetylcytidine + H2O = cytidine + acetate + H(+)</text>
        <dbReference type="Rhea" id="RHEA:62932"/>
        <dbReference type="ChEBI" id="CHEBI:15377"/>
        <dbReference type="ChEBI" id="CHEBI:15378"/>
        <dbReference type="ChEBI" id="CHEBI:17562"/>
        <dbReference type="ChEBI" id="CHEBI:30089"/>
        <dbReference type="ChEBI" id="CHEBI:70989"/>
        <dbReference type="EC" id="3.5.1.135"/>
    </reaction>
</comment>
<comment type="catalytic activity">
    <reaction evidence="2">
        <text>N(4)-acetyl-2'-deoxycytidine + H2O = 2'-deoxycytidine + acetate + H(+)</text>
        <dbReference type="Rhea" id="RHEA:62936"/>
        <dbReference type="ChEBI" id="CHEBI:15377"/>
        <dbReference type="ChEBI" id="CHEBI:15378"/>
        <dbReference type="ChEBI" id="CHEBI:15698"/>
        <dbReference type="ChEBI" id="CHEBI:30089"/>
        <dbReference type="ChEBI" id="CHEBI:146133"/>
        <dbReference type="EC" id="3.5.1.135"/>
    </reaction>
</comment>
<comment type="catalytic activity">
    <reaction evidence="2">
        <text>N(4)-acetylcytosine + H2O = cytosine + acetate + H(+)</text>
        <dbReference type="Rhea" id="RHEA:62940"/>
        <dbReference type="ChEBI" id="CHEBI:15377"/>
        <dbReference type="ChEBI" id="CHEBI:15378"/>
        <dbReference type="ChEBI" id="CHEBI:16040"/>
        <dbReference type="ChEBI" id="CHEBI:30089"/>
        <dbReference type="ChEBI" id="CHEBI:146134"/>
        <dbReference type="EC" id="3.5.1.135"/>
    </reaction>
</comment>
<comment type="similarity">
    <text evidence="2">Belongs to the N(4)-acetylcytidine amidohydrolase family.</text>
</comment>
<accession>B1ITA2</accession>
<keyword id="KW-0378">Hydrolase</keyword>
<gene>
    <name type="primary">yqfB</name>
    <name type="ordered locus">EcolC_0809</name>
</gene>
<organism>
    <name type="scientific">Escherichia coli (strain ATCC 8739 / DSM 1576 / NBRC 3972 / NCIMB 8545 / WDCM 00012 / Crooks)</name>
    <dbReference type="NCBI Taxonomy" id="481805"/>
    <lineage>
        <taxon>Bacteria</taxon>
        <taxon>Pseudomonadati</taxon>
        <taxon>Pseudomonadota</taxon>
        <taxon>Gammaproteobacteria</taxon>
        <taxon>Enterobacterales</taxon>
        <taxon>Enterobacteriaceae</taxon>
        <taxon>Escherichia</taxon>
    </lineage>
</organism>
<evidence type="ECO:0000255" key="1"/>
<evidence type="ECO:0000255" key="2">
    <source>
        <dbReference type="HAMAP-Rule" id="MF_00684"/>
    </source>
</evidence>
<protein>
    <recommendedName>
        <fullName evidence="2">N(4)-acetylcytidine amidohydrolase</fullName>
        <shortName evidence="2">ac4C amidohydrolase</shortName>
        <ecNumber evidence="2">3.5.1.135</ecNumber>
    </recommendedName>
</protein>
<feature type="chain" id="PRO_1000083061" description="N(4)-acetylcytidine amidohydrolase">
    <location>
        <begin position="1"/>
        <end position="103"/>
    </location>
</feature>
<feature type="domain" description="ASCH" evidence="1">
    <location>
        <begin position="6"/>
        <end position="101"/>
    </location>
</feature>
<feature type="active site" description="Proton acceptor" evidence="2">
    <location>
        <position position="21"/>
    </location>
</feature>
<feature type="active site" description="Nucleophile" evidence="2">
    <location>
        <position position="24"/>
    </location>
</feature>
<feature type="active site" description="Proton donor" evidence="2">
    <location>
        <position position="74"/>
    </location>
</feature>